<accession>Q9T031</accession>
<dbReference type="EMBL" id="AL050351">
    <property type="protein sequence ID" value="CAB43639.1"/>
    <property type="molecule type" value="Genomic_DNA"/>
</dbReference>
<dbReference type="EMBL" id="AL161594">
    <property type="protein sequence ID" value="CAB80587.1"/>
    <property type="molecule type" value="Genomic_DNA"/>
</dbReference>
<dbReference type="EMBL" id="CP002687">
    <property type="protein sequence ID" value="AEE87042.1"/>
    <property type="molecule type" value="Genomic_DNA"/>
</dbReference>
<dbReference type="EMBL" id="AF370467">
    <property type="protein sequence ID" value="AAK43844.1"/>
    <property type="molecule type" value="mRNA"/>
</dbReference>
<dbReference type="EMBL" id="AY128921">
    <property type="protein sequence ID" value="AAM91321.1"/>
    <property type="molecule type" value="mRNA"/>
</dbReference>
<dbReference type="PIR" id="T08572">
    <property type="entry name" value="T08572"/>
</dbReference>
<dbReference type="RefSeq" id="NP_195635.1">
    <property type="nucleotide sequence ID" value="NM_120085.4"/>
</dbReference>
<dbReference type="SMR" id="Q9T031"/>
<dbReference type="BioGRID" id="15360">
    <property type="interactions" value="3"/>
</dbReference>
<dbReference type="FunCoup" id="Q9T031">
    <property type="interactions" value="92"/>
</dbReference>
<dbReference type="IntAct" id="Q9T031">
    <property type="interactions" value="2"/>
</dbReference>
<dbReference type="PaxDb" id="3702-AT4G39240.1"/>
<dbReference type="ProteomicsDB" id="230691"/>
<dbReference type="EnsemblPlants" id="AT4G39240.1">
    <property type="protein sequence ID" value="AT4G39240.1"/>
    <property type="gene ID" value="AT4G39240"/>
</dbReference>
<dbReference type="GeneID" id="830080"/>
<dbReference type="Gramene" id="AT4G39240.1">
    <property type="protein sequence ID" value="AT4G39240.1"/>
    <property type="gene ID" value="AT4G39240"/>
</dbReference>
<dbReference type="KEGG" id="ath:AT4G39240"/>
<dbReference type="Araport" id="AT4G39240"/>
<dbReference type="TAIR" id="AT4G39240"/>
<dbReference type="eggNOG" id="KOG1072">
    <property type="taxonomic scope" value="Eukaryota"/>
</dbReference>
<dbReference type="HOGENOM" id="CLU_032521_1_2_1"/>
<dbReference type="InParanoid" id="Q9T031"/>
<dbReference type="OMA" id="WGTVLWS"/>
<dbReference type="PhylomeDB" id="Q9T031"/>
<dbReference type="PRO" id="PR:Q9T031"/>
<dbReference type="Proteomes" id="UP000006548">
    <property type="component" value="Chromosome 4"/>
</dbReference>
<dbReference type="ExpressionAtlas" id="Q9T031">
    <property type="expression patterns" value="baseline and differential"/>
</dbReference>
<dbReference type="CDD" id="cd22152">
    <property type="entry name" value="F-box_AtAFR-like"/>
    <property type="match status" value="1"/>
</dbReference>
<dbReference type="Gene3D" id="2.120.10.80">
    <property type="entry name" value="Kelch-type beta propeller"/>
    <property type="match status" value="1"/>
</dbReference>
<dbReference type="InterPro" id="IPR036047">
    <property type="entry name" value="F-box-like_dom_sf"/>
</dbReference>
<dbReference type="InterPro" id="IPR050354">
    <property type="entry name" value="F-box/kelch-repeat_ARATH"/>
</dbReference>
<dbReference type="InterPro" id="IPR001810">
    <property type="entry name" value="F-box_dom"/>
</dbReference>
<dbReference type="InterPro" id="IPR015915">
    <property type="entry name" value="Kelch-typ_b-propeller"/>
</dbReference>
<dbReference type="InterPro" id="IPR006652">
    <property type="entry name" value="Kelch_1"/>
</dbReference>
<dbReference type="PANTHER" id="PTHR24414:SF78">
    <property type="entry name" value="F-BOX DOMAIN-CONTAINING PROTEIN"/>
    <property type="match status" value="1"/>
</dbReference>
<dbReference type="PANTHER" id="PTHR24414">
    <property type="entry name" value="F-BOX/KELCH-REPEAT PROTEIN SKIP4"/>
    <property type="match status" value="1"/>
</dbReference>
<dbReference type="Pfam" id="PF00646">
    <property type="entry name" value="F-box"/>
    <property type="match status" value="1"/>
</dbReference>
<dbReference type="Pfam" id="PF25210">
    <property type="entry name" value="Kelch_FKB95"/>
    <property type="match status" value="1"/>
</dbReference>
<dbReference type="SMART" id="SM00256">
    <property type="entry name" value="FBOX"/>
    <property type="match status" value="1"/>
</dbReference>
<dbReference type="SMART" id="SM00612">
    <property type="entry name" value="Kelch"/>
    <property type="match status" value="2"/>
</dbReference>
<dbReference type="SUPFAM" id="SSF81383">
    <property type="entry name" value="F-box domain"/>
    <property type="match status" value="1"/>
</dbReference>
<dbReference type="SUPFAM" id="SSF117281">
    <property type="entry name" value="Kelch motif"/>
    <property type="match status" value="1"/>
</dbReference>
<dbReference type="PROSITE" id="PS50181">
    <property type="entry name" value="FBOX"/>
    <property type="match status" value="1"/>
</dbReference>
<sequence>MPFSAASSSSVSSIAEEPPPKKQHDPSPSCSSYLLLLPDEIILNCLARLPKCYYPVISLVSKTFRRLIASPEIYVERSLLRRTERVLYVVLRSHATETPRWYTLNFKPFGNDSNNHRLVPIPSFPSIPCWGMSIVAIDSEIYVLGGCIDNELVSTGFVVECPSHTCRLLPSMKQARGCAAVGFFDGKLYVIGGCNPLSVNWVEAFDLKTQTWESGLGVNNVEMHDLTIRSFAIDDKIYIMDRKNSFVYDPKEGTLETDELLDTQWSVGSCVIDGKIYTFGSKNRIWVFDPIAMVWDRLKGLDDLPDKRDGSRMSNLGGNLAIMFNLEKGSTKICCTEIRLERREGGKIWGTVLWSNIVITLKEPSTIVRCLTVTV</sequence>
<reference key="1">
    <citation type="journal article" date="1999" name="Nature">
        <title>Sequence and analysis of chromosome 4 of the plant Arabidopsis thaliana.</title>
        <authorList>
            <person name="Mayer K.F.X."/>
            <person name="Schueller C."/>
            <person name="Wambutt R."/>
            <person name="Murphy G."/>
            <person name="Volckaert G."/>
            <person name="Pohl T."/>
            <person name="Duesterhoeft A."/>
            <person name="Stiekema W."/>
            <person name="Entian K.-D."/>
            <person name="Terryn N."/>
            <person name="Harris B."/>
            <person name="Ansorge W."/>
            <person name="Brandt P."/>
            <person name="Grivell L.A."/>
            <person name="Rieger M."/>
            <person name="Weichselgartner M."/>
            <person name="de Simone V."/>
            <person name="Obermaier B."/>
            <person name="Mache R."/>
            <person name="Mueller M."/>
            <person name="Kreis M."/>
            <person name="Delseny M."/>
            <person name="Puigdomenech P."/>
            <person name="Watson M."/>
            <person name="Schmidtheini T."/>
            <person name="Reichert B."/>
            <person name="Portetelle D."/>
            <person name="Perez-Alonso M."/>
            <person name="Boutry M."/>
            <person name="Bancroft I."/>
            <person name="Vos P."/>
            <person name="Hoheisel J."/>
            <person name="Zimmermann W."/>
            <person name="Wedler H."/>
            <person name="Ridley P."/>
            <person name="Langham S.-A."/>
            <person name="McCullagh B."/>
            <person name="Bilham L."/>
            <person name="Robben J."/>
            <person name="van der Schueren J."/>
            <person name="Grymonprez B."/>
            <person name="Chuang Y.-J."/>
            <person name="Vandenbussche F."/>
            <person name="Braeken M."/>
            <person name="Weltjens I."/>
            <person name="Voet M."/>
            <person name="Bastiaens I."/>
            <person name="Aert R."/>
            <person name="Defoor E."/>
            <person name="Weitzenegger T."/>
            <person name="Bothe G."/>
            <person name="Ramsperger U."/>
            <person name="Hilbert H."/>
            <person name="Braun M."/>
            <person name="Holzer E."/>
            <person name="Brandt A."/>
            <person name="Peters S."/>
            <person name="van Staveren M."/>
            <person name="Dirkse W."/>
            <person name="Mooijman P."/>
            <person name="Klein Lankhorst R."/>
            <person name="Rose M."/>
            <person name="Hauf J."/>
            <person name="Koetter P."/>
            <person name="Berneiser S."/>
            <person name="Hempel S."/>
            <person name="Feldpausch M."/>
            <person name="Lamberth S."/>
            <person name="Van den Daele H."/>
            <person name="De Keyser A."/>
            <person name="Buysshaert C."/>
            <person name="Gielen J."/>
            <person name="Villarroel R."/>
            <person name="De Clercq R."/>
            <person name="van Montagu M."/>
            <person name="Rogers J."/>
            <person name="Cronin A."/>
            <person name="Quail M.A."/>
            <person name="Bray-Allen S."/>
            <person name="Clark L."/>
            <person name="Doggett J."/>
            <person name="Hall S."/>
            <person name="Kay M."/>
            <person name="Lennard N."/>
            <person name="McLay K."/>
            <person name="Mayes R."/>
            <person name="Pettett A."/>
            <person name="Rajandream M.A."/>
            <person name="Lyne M."/>
            <person name="Benes V."/>
            <person name="Rechmann S."/>
            <person name="Borkova D."/>
            <person name="Bloecker H."/>
            <person name="Scharfe M."/>
            <person name="Grimm M."/>
            <person name="Loehnert T.-H."/>
            <person name="Dose S."/>
            <person name="de Haan M."/>
            <person name="Maarse A.C."/>
            <person name="Schaefer M."/>
            <person name="Mueller-Auer S."/>
            <person name="Gabel C."/>
            <person name="Fuchs M."/>
            <person name="Fartmann B."/>
            <person name="Granderath K."/>
            <person name="Dauner D."/>
            <person name="Herzl A."/>
            <person name="Neumann S."/>
            <person name="Argiriou A."/>
            <person name="Vitale D."/>
            <person name="Liguori R."/>
            <person name="Piravandi E."/>
            <person name="Massenet O."/>
            <person name="Quigley F."/>
            <person name="Clabauld G."/>
            <person name="Muendlein A."/>
            <person name="Felber R."/>
            <person name="Schnabl S."/>
            <person name="Hiller R."/>
            <person name="Schmidt W."/>
            <person name="Lecharny A."/>
            <person name="Aubourg S."/>
            <person name="Chefdor F."/>
            <person name="Cooke R."/>
            <person name="Berger C."/>
            <person name="Monfort A."/>
            <person name="Casacuberta E."/>
            <person name="Gibbons T."/>
            <person name="Weber N."/>
            <person name="Vandenbol M."/>
            <person name="Bargues M."/>
            <person name="Terol J."/>
            <person name="Torres A."/>
            <person name="Perez-Perez A."/>
            <person name="Purnelle B."/>
            <person name="Bent E."/>
            <person name="Johnson S."/>
            <person name="Tacon D."/>
            <person name="Jesse T."/>
            <person name="Heijnen L."/>
            <person name="Schwarz S."/>
            <person name="Scholler P."/>
            <person name="Heber S."/>
            <person name="Francs P."/>
            <person name="Bielke C."/>
            <person name="Frishman D."/>
            <person name="Haase D."/>
            <person name="Lemcke K."/>
            <person name="Mewes H.-W."/>
            <person name="Stocker S."/>
            <person name="Zaccaria P."/>
            <person name="Bevan M."/>
            <person name="Wilson R.K."/>
            <person name="de la Bastide M."/>
            <person name="Habermann K."/>
            <person name="Parnell L."/>
            <person name="Dedhia N."/>
            <person name="Gnoj L."/>
            <person name="Schutz K."/>
            <person name="Huang E."/>
            <person name="Spiegel L."/>
            <person name="Sekhon M."/>
            <person name="Murray J."/>
            <person name="Sheet P."/>
            <person name="Cordes M."/>
            <person name="Abu-Threideh J."/>
            <person name="Stoneking T."/>
            <person name="Kalicki J."/>
            <person name="Graves T."/>
            <person name="Harmon G."/>
            <person name="Edwards J."/>
            <person name="Latreille P."/>
            <person name="Courtney L."/>
            <person name="Cloud J."/>
            <person name="Abbott A."/>
            <person name="Scott K."/>
            <person name="Johnson D."/>
            <person name="Minx P."/>
            <person name="Bentley D."/>
            <person name="Fulton B."/>
            <person name="Miller N."/>
            <person name="Greco T."/>
            <person name="Kemp K."/>
            <person name="Kramer J."/>
            <person name="Fulton L."/>
            <person name="Mardis E."/>
            <person name="Dante M."/>
            <person name="Pepin K."/>
            <person name="Hillier L.W."/>
            <person name="Nelson J."/>
            <person name="Spieth J."/>
            <person name="Ryan E."/>
            <person name="Andrews S."/>
            <person name="Geisel C."/>
            <person name="Layman D."/>
            <person name="Du H."/>
            <person name="Ali J."/>
            <person name="Berghoff A."/>
            <person name="Jones K."/>
            <person name="Drone K."/>
            <person name="Cotton M."/>
            <person name="Joshu C."/>
            <person name="Antonoiu B."/>
            <person name="Zidanic M."/>
            <person name="Strong C."/>
            <person name="Sun H."/>
            <person name="Lamar B."/>
            <person name="Yordan C."/>
            <person name="Ma P."/>
            <person name="Zhong J."/>
            <person name="Preston R."/>
            <person name="Vil D."/>
            <person name="Shekher M."/>
            <person name="Matero A."/>
            <person name="Shah R."/>
            <person name="Swaby I.K."/>
            <person name="O'Shaughnessy A."/>
            <person name="Rodriguez M."/>
            <person name="Hoffman J."/>
            <person name="Till S."/>
            <person name="Granat S."/>
            <person name="Shohdy N."/>
            <person name="Hasegawa A."/>
            <person name="Hameed A."/>
            <person name="Lodhi M."/>
            <person name="Johnson A."/>
            <person name="Chen E."/>
            <person name="Marra M.A."/>
            <person name="Martienssen R."/>
            <person name="McCombie W.R."/>
        </authorList>
    </citation>
    <scope>NUCLEOTIDE SEQUENCE [LARGE SCALE GENOMIC DNA]</scope>
    <source>
        <strain>cv. Columbia</strain>
    </source>
</reference>
<reference key="2">
    <citation type="journal article" date="2017" name="Plant J.">
        <title>Araport11: a complete reannotation of the Arabidopsis thaliana reference genome.</title>
        <authorList>
            <person name="Cheng C.Y."/>
            <person name="Krishnakumar V."/>
            <person name="Chan A.P."/>
            <person name="Thibaud-Nissen F."/>
            <person name="Schobel S."/>
            <person name="Town C.D."/>
        </authorList>
    </citation>
    <scope>GENOME REANNOTATION</scope>
    <source>
        <strain>cv. Columbia</strain>
    </source>
</reference>
<reference key="3">
    <citation type="journal article" date="2003" name="Science">
        <title>Empirical analysis of transcriptional activity in the Arabidopsis genome.</title>
        <authorList>
            <person name="Yamada K."/>
            <person name="Lim J."/>
            <person name="Dale J.M."/>
            <person name="Chen H."/>
            <person name="Shinn P."/>
            <person name="Palm C.J."/>
            <person name="Southwick A.M."/>
            <person name="Wu H.C."/>
            <person name="Kim C.J."/>
            <person name="Nguyen M."/>
            <person name="Pham P.K."/>
            <person name="Cheuk R.F."/>
            <person name="Karlin-Newmann G."/>
            <person name="Liu S.X."/>
            <person name="Lam B."/>
            <person name="Sakano H."/>
            <person name="Wu T."/>
            <person name="Yu G."/>
            <person name="Miranda M."/>
            <person name="Quach H.L."/>
            <person name="Tripp M."/>
            <person name="Chang C.H."/>
            <person name="Lee J.M."/>
            <person name="Toriumi M.J."/>
            <person name="Chan M.M."/>
            <person name="Tang C.C."/>
            <person name="Onodera C.S."/>
            <person name="Deng J.M."/>
            <person name="Akiyama K."/>
            <person name="Ansari Y."/>
            <person name="Arakawa T."/>
            <person name="Banh J."/>
            <person name="Banno F."/>
            <person name="Bowser L."/>
            <person name="Brooks S.Y."/>
            <person name="Carninci P."/>
            <person name="Chao Q."/>
            <person name="Choy N."/>
            <person name="Enju A."/>
            <person name="Goldsmith A.D."/>
            <person name="Gurjal M."/>
            <person name="Hansen N.F."/>
            <person name="Hayashizaki Y."/>
            <person name="Johnson-Hopson C."/>
            <person name="Hsuan V.W."/>
            <person name="Iida K."/>
            <person name="Karnes M."/>
            <person name="Khan S."/>
            <person name="Koesema E."/>
            <person name="Ishida J."/>
            <person name="Jiang P.X."/>
            <person name="Jones T."/>
            <person name="Kawai J."/>
            <person name="Kamiya A."/>
            <person name="Meyers C."/>
            <person name="Nakajima M."/>
            <person name="Narusaka M."/>
            <person name="Seki M."/>
            <person name="Sakurai T."/>
            <person name="Satou M."/>
            <person name="Tamse R."/>
            <person name="Vaysberg M."/>
            <person name="Wallender E.K."/>
            <person name="Wong C."/>
            <person name="Yamamura Y."/>
            <person name="Yuan S."/>
            <person name="Shinozaki K."/>
            <person name="Davis R.W."/>
            <person name="Theologis A."/>
            <person name="Ecker J.R."/>
        </authorList>
    </citation>
    <scope>NUCLEOTIDE SEQUENCE [LARGE SCALE MRNA]</scope>
    <source>
        <strain>cv. Columbia</strain>
    </source>
</reference>
<name>FBK96_ARATH</name>
<protein>
    <recommendedName>
        <fullName>F-box/kelch-repeat protein At4g39240</fullName>
    </recommendedName>
</protein>
<evidence type="ECO:0000255" key="1">
    <source>
        <dbReference type="PROSITE-ProRule" id="PRU00080"/>
    </source>
</evidence>
<evidence type="ECO:0000256" key="2">
    <source>
        <dbReference type="SAM" id="MobiDB-lite"/>
    </source>
</evidence>
<keyword id="KW-0880">Kelch repeat</keyword>
<keyword id="KW-1185">Reference proteome</keyword>
<keyword id="KW-0677">Repeat</keyword>
<organism>
    <name type="scientific">Arabidopsis thaliana</name>
    <name type="common">Mouse-ear cress</name>
    <dbReference type="NCBI Taxonomy" id="3702"/>
    <lineage>
        <taxon>Eukaryota</taxon>
        <taxon>Viridiplantae</taxon>
        <taxon>Streptophyta</taxon>
        <taxon>Embryophyta</taxon>
        <taxon>Tracheophyta</taxon>
        <taxon>Spermatophyta</taxon>
        <taxon>Magnoliopsida</taxon>
        <taxon>eudicotyledons</taxon>
        <taxon>Gunneridae</taxon>
        <taxon>Pentapetalae</taxon>
        <taxon>rosids</taxon>
        <taxon>malvids</taxon>
        <taxon>Brassicales</taxon>
        <taxon>Brassicaceae</taxon>
        <taxon>Camelineae</taxon>
        <taxon>Arabidopsis</taxon>
    </lineage>
</organism>
<feature type="chain" id="PRO_0000283254" description="F-box/kelch-repeat protein At4g39240">
    <location>
        <begin position="1"/>
        <end position="375"/>
    </location>
</feature>
<feature type="domain" description="F-box" evidence="1">
    <location>
        <begin position="31"/>
        <end position="77"/>
    </location>
</feature>
<feature type="repeat" description="Kelch 1">
    <location>
        <begin position="140"/>
        <end position="186"/>
    </location>
</feature>
<feature type="repeat" description="Kelch 2">
    <location>
        <begin position="187"/>
        <end position="232"/>
    </location>
</feature>
<feature type="repeat" description="Kelch 3">
    <location>
        <begin position="275"/>
        <end position="321"/>
    </location>
</feature>
<feature type="region of interest" description="Disordered" evidence="2">
    <location>
        <begin position="1"/>
        <end position="27"/>
    </location>
</feature>
<feature type="compositionally biased region" description="Low complexity" evidence="2">
    <location>
        <begin position="1"/>
        <end position="15"/>
    </location>
</feature>
<proteinExistence type="evidence at transcript level"/>
<gene>
    <name type="ordered locus">At4g39240</name>
    <name type="ORF">T22F8.140</name>
</gene>